<gene>
    <name type="primary">CRK2</name>
    <name type="ordered locus">At1g70520</name>
    <name type="ORF">F24J13.9</name>
</gene>
<evidence type="ECO:0000250" key="1">
    <source>
        <dbReference type="UniProtKB" id="O48814"/>
    </source>
</evidence>
<evidence type="ECO:0000255" key="2"/>
<evidence type="ECO:0000255" key="3">
    <source>
        <dbReference type="PROSITE-ProRule" id="PRU00159"/>
    </source>
</evidence>
<evidence type="ECO:0000255" key="4">
    <source>
        <dbReference type="PROSITE-ProRule" id="PRU00806"/>
    </source>
</evidence>
<evidence type="ECO:0000255" key="5">
    <source>
        <dbReference type="PROSITE-ProRule" id="PRU10027"/>
    </source>
</evidence>
<evidence type="ECO:0000305" key="6"/>
<protein>
    <recommendedName>
        <fullName>Cysteine-rich receptor-like protein kinase 2</fullName>
        <shortName>Cysteine-rich RLK2</shortName>
        <ecNumber>2.7.11.-</ecNumber>
    </recommendedName>
</protein>
<sequence length="649" mass="72000">MKKEPVHILPLYLPCLLMFLLSSLRQITGDARARAVKVTCSPLLEHNETAYVPNFVATMEKISTQVQTSGFGVALTGTGPDANYGLAQCYGDLPLNDCVLCYAEARTMLPQCYPQNGGRIFLDGCFMRAENYSFYNEYKGPEDSIVCGNTTRKNKTFGDAVRQGLRNAVTEASGTGGYARASAKAGESESESAFVLANCWRTLSPDSCKQCLENASASVVKGCLPWSEGRALHTGCFLRYSDQDFLNKIPRNGRSRGSVVVIVVSVLSSVVVFMIGVAVSVYICKRRTIKRKRRGSKDVEKMAKTLKDSSLNFKYSTLEKATGSFDNANKLGQGGFGTVYKGVLPDGRDIAVKRLFFNNRHRATDFYNEVNMISTVEHKNLVRLLGCSCSGPESLLVYEYLQNKSLDRFIFDVNRGKTLDWQRRYTIIVGTAEGLVYLHEQSSVKIIHRDIKASNILLDSKLQAKIADFGLARSFQDDKSHISTAIAGTLGYMAPEYLAHGQLTEMVDVYSFGVLVLEIVTGKQNTKSKMSDYSDSLITEAWKHFQSGELEKIYDPNLDWKSQYDSHIIKKEIARVVQIGLLCTQEIPSLRPPMSKLLHMLKNKEEVLPLPSNPPFMDERVMELRDGSDGDSAGCASLATVSQSSFYGR</sequence>
<keyword id="KW-0067">ATP-binding</keyword>
<keyword id="KW-0325">Glycoprotein</keyword>
<keyword id="KW-0418">Kinase</keyword>
<keyword id="KW-0472">Membrane</keyword>
<keyword id="KW-0547">Nucleotide-binding</keyword>
<keyword id="KW-0597">Phosphoprotein</keyword>
<keyword id="KW-0675">Receptor</keyword>
<keyword id="KW-1185">Reference proteome</keyword>
<keyword id="KW-0677">Repeat</keyword>
<keyword id="KW-0723">Serine/threonine-protein kinase</keyword>
<keyword id="KW-0732">Signal</keyword>
<keyword id="KW-0808">Transferase</keyword>
<keyword id="KW-0812">Transmembrane</keyword>
<keyword id="KW-1133">Transmembrane helix</keyword>
<name>CRK2_ARATH</name>
<organism>
    <name type="scientific">Arabidopsis thaliana</name>
    <name type="common">Mouse-ear cress</name>
    <dbReference type="NCBI Taxonomy" id="3702"/>
    <lineage>
        <taxon>Eukaryota</taxon>
        <taxon>Viridiplantae</taxon>
        <taxon>Streptophyta</taxon>
        <taxon>Embryophyta</taxon>
        <taxon>Tracheophyta</taxon>
        <taxon>Spermatophyta</taxon>
        <taxon>Magnoliopsida</taxon>
        <taxon>eudicotyledons</taxon>
        <taxon>Gunneridae</taxon>
        <taxon>Pentapetalae</taxon>
        <taxon>rosids</taxon>
        <taxon>malvids</taxon>
        <taxon>Brassicales</taxon>
        <taxon>Brassicaceae</taxon>
        <taxon>Camelineae</taxon>
        <taxon>Arabidopsis</taxon>
    </lineage>
</organism>
<dbReference type="EC" id="2.7.11.-"/>
<dbReference type="EMBL" id="AC010796">
    <property type="protein sequence ID" value="AAG52471.1"/>
    <property type="molecule type" value="Genomic_DNA"/>
</dbReference>
<dbReference type="EMBL" id="CP002684">
    <property type="protein sequence ID" value="AEE35074.1"/>
    <property type="molecule type" value="Genomic_DNA"/>
</dbReference>
<dbReference type="EMBL" id="AK118924">
    <property type="protein sequence ID" value="BAC43506.1"/>
    <property type="molecule type" value="mRNA"/>
</dbReference>
<dbReference type="PIR" id="B96729">
    <property type="entry name" value="B96729"/>
</dbReference>
<dbReference type="RefSeq" id="NP_177209.1">
    <property type="nucleotide sequence ID" value="NM_105720.4"/>
</dbReference>
<dbReference type="SMR" id="Q9CAL3"/>
<dbReference type="BioGRID" id="28609">
    <property type="interactions" value="29"/>
</dbReference>
<dbReference type="FunCoup" id="Q9CAL3">
    <property type="interactions" value="310"/>
</dbReference>
<dbReference type="IntAct" id="Q9CAL3">
    <property type="interactions" value="26"/>
</dbReference>
<dbReference type="STRING" id="3702.Q9CAL3"/>
<dbReference type="GlyCosmos" id="Q9CAL3">
    <property type="glycosylation" value="5 sites, No reported glycans"/>
</dbReference>
<dbReference type="GlyGen" id="Q9CAL3">
    <property type="glycosylation" value="5 sites"/>
</dbReference>
<dbReference type="iPTMnet" id="Q9CAL3"/>
<dbReference type="SwissPalm" id="Q9CAL3"/>
<dbReference type="PaxDb" id="3702-AT1G70520.1"/>
<dbReference type="ProteomicsDB" id="222733"/>
<dbReference type="EnsemblPlants" id="AT1G70520.1">
    <property type="protein sequence ID" value="AT1G70520.1"/>
    <property type="gene ID" value="AT1G70520"/>
</dbReference>
<dbReference type="GeneID" id="843389"/>
<dbReference type="Gramene" id="AT1G70520.1">
    <property type="protein sequence ID" value="AT1G70520.1"/>
    <property type="gene ID" value="AT1G70520"/>
</dbReference>
<dbReference type="KEGG" id="ath:AT1G70520"/>
<dbReference type="Araport" id="AT1G70520"/>
<dbReference type="TAIR" id="AT1G70520">
    <property type="gene designation" value="CRK2"/>
</dbReference>
<dbReference type="eggNOG" id="ENOG502QRU4">
    <property type="taxonomic scope" value="Eukaryota"/>
</dbReference>
<dbReference type="HOGENOM" id="CLU_000288_35_6_1"/>
<dbReference type="InParanoid" id="Q9CAL3"/>
<dbReference type="OMA" id="MRSENYT"/>
<dbReference type="PhylomeDB" id="Q9CAL3"/>
<dbReference type="PRO" id="PR:Q9CAL3"/>
<dbReference type="Proteomes" id="UP000006548">
    <property type="component" value="Chromosome 1"/>
</dbReference>
<dbReference type="ExpressionAtlas" id="Q9CAL3">
    <property type="expression patterns" value="baseline and differential"/>
</dbReference>
<dbReference type="GO" id="GO:0005886">
    <property type="term" value="C:plasma membrane"/>
    <property type="evidence" value="ECO:0000314"/>
    <property type="project" value="TAIR"/>
</dbReference>
<dbReference type="GO" id="GO:0009506">
    <property type="term" value="C:plasmodesma"/>
    <property type="evidence" value="ECO:0007005"/>
    <property type="project" value="TAIR"/>
</dbReference>
<dbReference type="GO" id="GO:0005524">
    <property type="term" value="F:ATP binding"/>
    <property type="evidence" value="ECO:0007669"/>
    <property type="project" value="UniProtKB-KW"/>
</dbReference>
<dbReference type="GO" id="GO:0016301">
    <property type="term" value="F:kinase activity"/>
    <property type="evidence" value="ECO:0000314"/>
    <property type="project" value="TAIR"/>
</dbReference>
<dbReference type="GO" id="GO:0004672">
    <property type="term" value="F:protein kinase activity"/>
    <property type="evidence" value="ECO:0000314"/>
    <property type="project" value="TAIR"/>
</dbReference>
<dbReference type="GO" id="GO:0106310">
    <property type="term" value="F:protein serine kinase activity"/>
    <property type="evidence" value="ECO:0007669"/>
    <property type="project" value="RHEA"/>
</dbReference>
<dbReference type="GO" id="GO:0004674">
    <property type="term" value="F:protein serine/threonine kinase activity"/>
    <property type="evidence" value="ECO:0007005"/>
    <property type="project" value="TAIR"/>
</dbReference>
<dbReference type="GO" id="GO:0052545">
    <property type="term" value="P:callose localization"/>
    <property type="evidence" value="ECO:0000315"/>
    <property type="project" value="TAIR"/>
</dbReference>
<dbReference type="GO" id="GO:0046777">
    <property type="term" value="P:protein autophosphorylation"/>
    <property type="evidence" value="ECO:0000314"/>
    <property type="project" value="TAIR"/>
</dbReference>
<dbReference type="GO" id="GO:0006468">
    <property type="term" value="P:protein phosphorylation"/>
    <property type="evidence" value="ECO:0000314"/>
    <property type="project" value="TAIR"/>
</dbReference>
<dbReference type="GO" id="GO:0072593">
    <property type="term" value="P:reactive oxygen species metabolic process"/>
    <property type="evidence" value="ECO:0000314"/>
    <property type="project" value="TAIR"/>
</dbReference>
<dbReference type="GO" id="GO:0010193">
    <property type="term" value="P:response to ozone"/>
    <property type="evidence" value="ECO:0000270"/>
    <property type="project" value="TAIR"/>
</dbReference>
<dbReference type="CDD" id="cd23509">
    <property type="entry name" value="Gnk2-like"/>
    <property type="match status" value="2"/>
</dbReference>
<dbReference type="CDD" id="cd14066">
    <property type="entry name" value="STKc_IRAK"/>
    <property type="match status" value="1"/>
</dbReference>
<dbReference type="FunFam" id="1.10.510.10:FF:000336">
    <property type="entry name" value="Cysteine-rich receptor-like protein kinase 2"/>
    <property type="match status" value="1"/>
</dbReference>
<dbReference type="FunFam" id="3.30.430.20:FF:000005">
    <property type="entry name" value="Cysteine-rich receptor-like protein kinase 2"/>
    <property type="match status" value="1"/>
</dbReference>
<dbReference type="FunFam" id="3.30.430.20:FF:000015">
    <property type="entry name" value="Cysteine-rich receptor-like protein kinase 3"/>
    <property type="match status" value="1"/>
</dbReference>
<dbReference type="FunFam" id="3.30.200.20:FF:001208">
    <property type="entry name" value="Putative DUF26-domain receptor-like protein kinase family protein"/>
    <property type="match status" value="1"/>
</dbReference>
<dbReference type="Gene3D" id="3.30.430.20">
    <property type="entry name" value="Gnk2 domain, C-X8-C-X2-C motif"/>
    <property type="match status" value="2"/>
</dbReference>
<dbReference type="Gene3D" id="3.30.200.20">
    <property type="entry name" value="Phosphorylase Kinase, domain 1"/>
    <property type="match status" value="1"/>
</dbReference>
<dbReference type="Gene3D" id="1.10.510.10">
    <property type="entry name" value="Transferase(Phosphotransferase) domain 1"/>
    <property type="match status" value="1"/>
</dbReference>
<dbReference type="InterPro" id="IPR052059">
    <property type="entry name" value="CR_Ser/Thr_kinase"/>
</dbReference>
<dbReference type="InterPro" id="IPR002902">
    <property type="entry name" value="GNK2"/>
</dbReference>
<dbReference type="InterPro" id="IPR038408">
    <property type="entry name" value="GNK2_sf"/>
</dbReference>
<dbReference type="InterPro" id="IPR011009">
    <property type="entry name" value="Kinase-like_dom_sf"/>
</dbReference>
<dbReference type="InterPro" id="IPR000719">
    <property type="entry name" value="Prot_kinase_dom"/>
</dbReference>
<dbReference type="InterPro" id="IPR017441">
    <property type="entry name" value="Protein_kinase_ATP_BS"/>
</dbReference>
<dbReference type="InterPro" id="IPR008271">
    <property type="entry name" value="Ser/Thr_kinase_AS"/>
</dbReference>
<dbReference type="PANTHER" id="PTHR47973">
    <property type="entry name" value="CYSTEINE-RICH RECEPTOR-LIKE PROTEIN KINASE 3"/>
    <property type="match status" value="1"/>
</dbReference>
<dbReference type="Pfam" id="PF00069">
    <property type="entry name" value="Pkinase"/>
    <property type="match status" value="1"/>
</dbReference>
<dbReference type="Pfam" id="PF01657">
    <property type="entry name" value="Stress-antifung"/>
    <property type="match status" value="2"/>
</dbReference>
<dbReference type="SMART" id="SM00220">
    <property type="entry name" value="S_TKc"/>
    <property type="match status" value="1"/>
</dbReference>
<dbReference type="SUPFAM" id="SSF56112">
    <property type="entry name" value="Protein kinase-like (PK-like)"/>
    <property type="match status" value="1"/>
</dbReference>
<dbReference type="PROSITE" id="PS51473">
    <property type="entry name" value="GNK2"/>
    <property type="match status" value="2"/>
</dbReference>
<dbReference type="PROSITE" id="PS00107">
    <property type="entry name" value="PROTEIN_KINASE_ATP"/>
    <property type="match status" value="1"/>
</dbReference>
<dbReference type="PROSITE" id="PS50011">
    <property type="entry name" value="PROTEIN_KINASE_DOM"/>
    <property type="match status" value="1"/>
</dbReference>
<dbReference type="PROSITE" id="PS00108">
    <property type="entry name" value="PROTEIN_KINASE_ST"/>
    <property type="match status" value="1"/>
</dbReference>
<accession>Q9CAL3</accession>
<reference key="1">
    <citation type="journal article" date="2000" name="Nature">
        <title>Sequence and analysis of chromosome 1 of the plant Arabidopsis thaliana.</title>
        <authorList>
            <person name="Theologis A."/>
            <person name="Ecker J.R."/>
            <person name="Palm C.J."/>
            <person name="Federspiel N.A."/>
            <person name="Kaul S."/>
            <person name="White O."/>
            <person name="Alonso J."/>
            <person name="Altafi H."/>
            <person name="Araujo R."/>
            <person name="Bowman C.L."/>
            <person name="Brooks S.Y."/>
            <person name="Buehler E."/>
            <person name="Chan A."/>
            <person name="Chao Q."/>
            <person name="Chen H."/>
            <person name="Cheuk R.F."/>
            <person name="Chin C.W."/>
            <person name="Chung M.K."/>
            <person name="Conn L."/>
            <person name="Conway A.B."/>
            <person name="Conway A.R."/>
            <person name="Creasy T.H."/>
            <person name="Dewar K."/>
            <person name="Dunn P."/>
            <person name="Etgu P."/>
            <person name="Feldblyum T.V."/>
            <person name="Feng J.-D."/>
            <person name="Fong B."/>
            <person name="Fujii C.Y."/>
            <person name="Gill J.E."/>
            <person name="Goldsmith A.D."/>
            <person name="Haas B."/>
            <person name="Hansen N.F."/>
            <person name="Hughes B."/>
            <person name="Huizar L."/>
            <person name="Hunter J.L."/>
            <person name="Jenkins J."/>
            <person name="Johnson-Hopson C."/>
            <person name="Khan S."/>
            <person name="Khaykin E."/>
            <person name="Kim C.J."/>
            <person name="Koo H.L."/>
            <person name="Kremenetskaia I."/>
            <person name="Kurtz D.B."/>
            <person name="Kwan A."/>
            <person name="Lam B."/>
            <person name="Langin-Hooper S."/>
            <person name="Lee A."/>
            <person name="Lee J.M."/>
            <person name="Lenz C.A."/>
            <person name="Li J.H."/>
            <person name="Li Y.-P."/>
            <person name="Lin X."/>
            <person name="Liu S.X."/>
            <person name="Liu Z.A."/>
            <person name="Luros J.S."/>
            <person name="Maiti R."/>
            <person name="Marziali A."/>
            <person name="Militscher J."/>
            <person name="Miranda M."/>
            <person name="Nguyen M."/>
            <person name="Nierman W.C."/>
            <person name="Osborne B.I."/>
            <person name="Pai G."/>
            <person name="Peterson J."/>
            <person name="Pham P.K."/>
            <person name="Rizzo M."/>
            <person name="Rooney T."/>
            <person name="Rowley D."/>
            <person name="Sakano H."/>
            <person name="Salzberg S.L."/>
            <person name="Schwartz J.R."/>
            <person name="Shinn P."/>
            <person name="Southwick A.M."/>
            <person name="Sun H."/>
            <person name="Tallon L.J."/>
            <person name="Tambunga G."/>
            <person name="Toriumi M.J."/>
            <person name="Town C.D."/>
            <person name="Utterback T."/>
            <person name="Van Aken S."/>
            <person name="Vaysberg M."/>
            <person name="Vysotskaia V.S."/>
            <person name="Walker M."/>
            <person name="Wu D."/>
            <person name="Yu G."/>
            <person name="Fraser C.M."/>
            <person name="Venter J.C."/>
            <person name="Davis R.W."/>
        </authorList>
    </citation>
    <scope>NUCLEOTIDE SEQUENCE [LARGE SCALE GENOMIC DNA]</scope>
    <source>
        <strain>cv. Columbia</strain>
    </source>
</reference>
<reference key="2">
    <citation type="journal article" date="2017" name="Plant J.">
        <title>Araport11: a complete reannotation of the Arabidopsis thaliana reference genome.</title>
        <authorList>
            <person name="Cheng C.Y."/>
            <person name="Krishnakumar V."/>
            <person name="Chan A.P."/>
            <person name="Thibaud-Nissen F."/>
            <person name="Schobel S."/>
            <person name="Town C.D."/>
        </authorList>
    </citation>
    <scope>GENOME REANNOTATION</scope>
    <source>
        <strain>cv. Columbia</strain>
    </source>
</reference>
<reference key="3">
    <citation type="journal article" date="2002" name="Science">
        <title>Functional annotation of a full-length Arabidopsis cDNA collection.</title>
        <authorList>
            <person name="Seki M."/>
            <person name="Narusaka M."/>
            <person name="Kamiya A."/>
            <person name="Ishida J."/>
            <person name="Satou M."/>
            <person name="Sakurai T."/>
            <person name="Nakajima M."/>
            <person name="Enju A."/>
            <person name="Akiyama K."/>
            <person name="Oono Y."/>
            <person name="Muramatsu M."/>
            <person name="Hayashizaki Y."/>
            <person name="Kawai J."/>
            <person name="Carninci P."/>
            <person name="Itoh M."/>
            <person name="Ishii Y."/>
            <person name="Arakawa T."/>
            <person name="Shibata K."/>
            <person name="Shinagawa A."/>
            <person name="Shinozaki K."/>
        </authorList>
    </citation>
    <scope>NUCLEOTIDE SEQUENCE [LARGE SCALE MRNA]</scope>
    <source>
        <strain>cv. Columbia</strain>
    </source>
</reference>
<reference key="4">
    <citation type="journal article" date="2001" name="Plant Physiol.">
        <title>A superfamily of proteins with novel cysteine-rich repeats.</title>
        <authorList>
            <person name="Chen Z."/>
        </authorList>
    </citation>
    <scope>GENE FAMILY ORGANIZATION</scope>
    <scope>NOMENCLATURE</scope>
</reference>
<proteinExistence type="evidence at protein level"/>
<feature type="signal peptide" evidence="2">
    <location>
        <begin position="1"/>
        <end position="29"/>
    </location>
</feature>
<feature type="chain" id="PRO_0000295049" description="Cysteine-rich receptor-like protein kinase 2">
    <location>
        <begin position="30"/>
        <end position="649"/>
    </location>
</feature>
<feature type="topological domain" description="Extracellular" evidence="2">
    <location>
        <begin position="30"/>
        <end position="258"/>
    </location>
</feature>
<feature type="transmembrane region" description="Helical" evidence="2">
    <location>
        <begin position="259"/>
        <end position="279"/>
    </location>
</feature>
<feature type="topological domain" description="Cytoplasmic" evidence="2">
    <location>
        <begin position="280"/>
        <end position="649"/>
    </location>
</feature>
<feature type="domain" description="Gnk2-homologous 1" evidence="4">
    <location>
        <begin position="33"/>
        <end position="134"/>
    </location>
</feature>
<feature type="domain" description="Gnk2-homologous 2" evidence="4">
    <location>
        <begin position="139"/>
        <end position="245"/>
    </location>
</feature>
<feature type="domain" description="Protein kinase" evidence="3">
    <location>
        <begin position="325"/>
        <end position="608"/>
    </location>
</feature>
<feature type="active site" description="Proton acceptor" evidence="3 5">
    <location>
        <position position="450"/>
    </location>
</feature>
<feature type="binding site" evidence="3">
    <location>
        <begin position="331"/>
        <end position="339"/>
    </location>
    <ligand>
        <name>ATP</name>
        <dbReference type="ChEBI" id="CHEBI:30616"/>
    </ligand>
</feature>
<feature type="binding site" evidence="3">
    <location>
        <position position="353"/>
    </location>
    <ligand>
        <name>ATP</name>
        <dbReference type="ChEBI" id="CHEBI:30616"/>
    </ligand>
</feature>
<feature type="modified residue" description="Phosphotyrosine" evidence="1">
    <location>
        <position position="398"/>
    </location>
</feature>
<feature type="modified residue" description="Phosphoserine" evidence="1">
    <location>
        <position position="454"/>
    </location>
</feature>
<feature type="modified residue" description="Phosphoserine" evidence="1">
    <location>
        <position position="483"/>
    </location>
</feature>
<feature type="modified residue" description="Phosphothreonine" evidence="1">
    <location>
        <position position="484"/>
    </location>
</feature>
<feature type="modified residue" description="Phosphothreonine" evidence="1">
    <location>
        <position position="489"/>
    </location>
</feature>
<feature type="modified residue" description="Phosphotyrosine" evidence="1">
    <location>
        <position position="497"/>
    </location>
</feature>
<feature type="glycosylation site" description="N-linked (GlcNAc...) asparagine" evidence="2">
    <location>
        <position position="47"/>
    </location>
</feature>
<feature type="glycosylation site" description="N-linked (GlcNAc...) asparagine" evidence="2">
    <location>
        <position position="131"/>
    </location>
</feature>
<feature type="glycosylation site" description="N-linked (GlcNAc...) asparagine" evidence="2">
    <location>
        <position position="149"/>
    </location>
</feature>
<feature type="glycosylation site" description="N-linked (GlcNAc...) asparagine" evidence="2">
    <location>
        <position position="154"/>
    </location>
</feature>
<feature type="glycosylation site" description="N-linked (GlcNAc...) asparagine" evidence="2">
    <location>
        <position position="214"/>
    </location>
</feature>
<comment type="catalytic activity">
    <reaction>
        <text>L-seryl-[protein] + ATP = O-phospho-L-seryl-[protein] + ADP + H(+)</text>
        <dbReference type="Rhea" id="RHEA:17989"/>
        <dbReference type="Rhea" id="RHEA-COMP:9863"/>
        <dbReference type="Rhea" id="RHEA-COMP:11604"/>
        <dbReference type="ChEBI" id="CHEBI:15378"/>
        <dbReference type="ChEBI" id="CHEBI:29999"/>
        <dbReference type="ChEBI" id="CHEBI:30616"/>
        <dbReference type="ChEBI" id="CHEBI:83421"/>
        <dbReference type="ChEBI" id="CHEBI:456216"/>
    </reaction>
</comment>
<comment type="catalytic activity">
    <reaction>
        <text>L-threonyl-[protein] + ATP = O-phospho-L-threonyl-[protein] + ADP + H(+)</text>
        <dbReference type="Rhea" id="RHEA:46608"/>
        <dbReference type="Rhea" id="RHEA-COMP:11060"/>
        <dbReference type="Rhea" id="RHEA-COMP:11605"/>
        <dbReference type="ChEBI" id="CHEBI:15378"/>
        <dbReference type="ChEBI" id="CHEBI:30013"/>
        <dbReference type="ChEBI" id="CHEBI:30616"/>
        <dbReference type="ChEBI" id="CHEBI:61977"/>
        <dbReference type="ChEBI" id="CHEBI:456216"/>
    </reaction>
</comment>
<comment type="interaction">
    <interactant intactId="EBI-16920700">
        <id>Q9CAL3</id>
    </interactant>
    <interactant intactId="EBI-16886894">
        <id>Q9FK68</id>
        <label>RABA1C</label>
    </interactant>
    <organismsDiffer>false</organismsDiffer>
    <experiments>3</experiments>
</comment>
<comment type="subcellular location">
    <subcellularLocation>
        <location evidence="6">Membrane</location>
        <topology evidence="6">Single-pass membrane protein</topology>
    </subcellularLocation>
</comment>
<comment type="similarity">
    <text evidence="3">Belongs to the protein kinase superfamily. Ser/Thr protein kinase family. CRK subfamily.</text>
</comment>